<proteinExistence type="evidence at protein level"/>
<reference key="1">
    <citation type="journal article" date="1996" name="Cytogenet. Cell Genet.">
        <title>Isolation and mapping of the human glycoprotein M6 gene (GPM6A) to 4q33--&gt;q34.</title>
        <authorList>
            <person name="Shimizu F."/>
            <person name="Watanabe T.K."/>
            <person name="Fujiwara T."/>
            <person name="Takahashi E."/>
            <person name="Nakamura Y."/>
            <person name="Maekawa H."/>
        </authorList>
    </citation>
    <scope>NUCLEOTIDE SEQUENCE [MRNA] (ISOFORM 1)</scope>
    <source>
        <tissue>Fetal brain</tissue>
    </source>
</reference>
<reference key="2">
    <citation type="journal article" date="2004" name="Nat. Genet.">
        <title>Complete sequencing and characterization of 21,243 full-length human cDNAs.</title>
        <authorList>
            <person name="Ota T."/>
            <person name="Suzuki Y."/>
            <person name="Nishikawa T."/>
            <person name="Otsuki T."/>
            <person name="Sugiyama T."/>
            <person name="Irie R."/>
            <person name="Wakamatsu A."/>
            <person name="Hayashi K."/>
            <person name="Sato H."/>
            <person name="Nagai K."/>
            <person name="Kimura K."/>
            <person name="Makita H."/>
            <person name="Sekine M."/>
            <person name="Obayashi M."/>
            <person name="Nishi T."/>
            <person name="Shibahara T."/>
            <person name="Tanaka T."/>
            <person name="Ishii S."/>
            <person name="Yamamoto J."/>
            <person name="Saito K."/>
            <person name="Kawai Y."/>
            <person name="Isono Y."/>
            <person name="Nakamura Y."/>
            <person name="Nagahari K."/>
            <person name="Murakami K."/>
            <person name="Yasuda T."/>
            <person name="Iwayanagi T."/>
            <person name="Wagatsuma M."/>
            <person name="Shiratori A."/>
            <person name="Sudo H."/>
            <person name="Hosoiri T."/>
            <person name="Kaku Y."/>
            <person name="Kodaira H."/>
            <person name="Kondo H."/>
            <person name="Sugawara M."/>
            <person name="Takahashi M."/>
            <person name="Kanda K."/>
            <person name="Yokoi T."/>
            <person name="Furuya T."/>
            <person name="Kikkawa E."/>
            <person name="Omura Y."/>
            <person name="Abe K."/>
            <person name="Kamihara K."/>
            <person name="Katsuta N."/>
            <person name="Sato K."/>
            <person name="Tanikawa M."/>
            <person name="Yamazaki M."/>
            <person name="Ninomiya K."/>
            <person name="Ishibashi T."/>
            <person name="Yamashita H."/>
            <person name="Murakawa K."/>
            <person name="Fujimori K."/>
            <person name="Tanai H."/>
            <person name="Kimata M."/>
            <person name="Watanabe M."/>
            <person name="Hiraoka S."/>
            <person name="Chiba Y."/>
            <person name="Ishida S."/>
            <person name="Ono Y."/>
            <person name="Takiguchi S."/>
            <person name="Watanabe S."/>
            <person name="Yosida M."/>
            <person name="Hotuta T."/>
            <person name="Kusano J."/>
            <person name="Kanehori K."/>
            <person name="Takahashi-Fujii A."/>
            <person name="Hara H."/>
            <person name="Tanase T.-O."/>
            <person name="Nomura Y."/>
            <person name="Togiya S."/>
            <person name="Komai F."/>
            <person name="Hara R."/>
            <person name="Takeuchi K."/>
            <person name="Arita M."/>
            <person name="Imose N."/>
            <person name="Musashino K."/>
            <person name="Yuuki H."/>
            <person name="Oshima A."/>
            <person name="Sasaki N."/>
            <person name="Aotsuka S."/>
            <person name="Yoshikawa Y."/>
            <person name="Matsunawa H."/>
            <person name="Ichihara T."/>
            <person name="Shiohata N."/>
            <person name="Sano S."/>
            <person name="Moriya S."/>
            <person name="Momiyama H."/>
            <person name="Satoh N."/>
            <person name="Takami S."/>
            <person name="Terashima Y."/>
            <person name="Suzuki O."/>
            <person name="Nakagawa S."/>
            <person name="Senoh A."/>
            <person name="Mizoguchi H."/>
            <person name="Goto Y."/>
            <person name="Shimizu F."/>
            <person name="Wakebe H."/>
            <person name="Hishigaki H."/>
            <person name="Watanabe T."/>
            <person name="Sugiyama A."/>
            <person name="Takemoto M."/>
            <person name="Kawakami B."/>
            <person name="Yamazaki M."/>
            <person name="Watanabe K."/>
            <person name="Kumagai A."/>
            <person name="Itakura S."/>
            <person name="Fukuzumi Y."/>
            <person name="Fujimori Y."/>
            <person name="Komiyama M."/>
            <person name="Tashiro H."/>
            <person name="Tanigami A."/>
            <person name="Fujiwara T."/>
            <person name="Ono T."/>
            <person name="Yamada K."/>
            <person name="Fujii Y."/>
            <person name="Ozaki K."/>
            <person name="Hirao M."/>
            <person name="Ohmori Y."/>
            <person name="Kawabata A."/>
            <person name="Hikiji T."/>
            <person name="Kobatake N."/>
            <person name="Inagaki H."/>
            <person name="Ikema Y."/>
            <person name="Okamoto S."/>
            <person name="Okitani R."/>
            <person name="Kawakami T."/>
            <person name="Noguchi S."/>
            <person name="Itoh T."/>
            <person name="Shigeta K."/>
            <person name="Senba T."/>
            <person name="Matsumura K."/>
            <person name="Nakajima Y."/>
            <person name="Mizuno T."/>
            <person name="Morinaga M."/>
            <person name="Sasaki M."/>
            <person name="Togashi T."/>
            <person name="Oyama M."/>
            <person name="Hata H."/>
            <person name="Watanabe M."/>
            <person name="Komatsu T."/>
            <person name="Mizushima-Sugano J."/>
            <person name="Satoh T."/>
            <person name="Shirai Y."/>
            <person name="Takahashi Y."/>
            <person name="Nakagawa K."/>
            <person name="Okumura K."/>
            <person name="Nagase T."/>
            <person name="Nomura N."/>
            <person name="Kikuchi H."/>
            <person name="Masuho Y."/>
            <person name="Yamashita R."/>
            <person name="Nakai K."/>
            <person name="Yada T."/>
            <person name="Nakamura Y."/>
            <person name="Ohara O."/>
            <person name="Isogai T."/>
            <person name="Sugano S."/>
        </authorList>
    </citation>
    <scope>NUCLEOTIDE SEQUENCE [LARGE SCALE MRNA] (ISOFORM 2)</scope>
    <source>
        <tissue>Brain</tissue>
    </source>
</reference>
<reference key="3">
    <citation type="submission" date="2006-07" db="EMBL/GenBank/DDBJ databases">
        <authorList>
            <person name="Totoki Y."/>
            <person name="Toyoda A."/>
            <person name="Takeda T."/>
            <person name="Sakaki Y."/>
            <person name="Tanaka A."/>
            <person name="Yokoyama S."/>
            <person name="Ohara O."/>
            <person name="Nagase T."/>
            <person name="Kikuno R.F."/>
        </authorList>
    </citation>
    <scope>NUCLEOTIDE SEQUENCE [LARGE SCALE MRNA] (ISOFORM 3)</scope>
    <source>
        <tissue>Brain</tissue>
    </source>
</reference>
<reference key="4">
    <citation type="journal article" date="2005" name="Nature">
        <title>Generation and annotation of the DNA sequences of human chromosomes 2 and 4.</title>
        <authorList>
            <person name="Hillier L.W."/>
            <person name="Graves T.A."/>
            <person name="Fulton R.S."/>
            <person name="Fulton L.A."/>
            <person name="Pepin K.H."/>
            <person name="Minx P."/>
            <person name="Wagner-McPherson C."/>
            <person name="Layman D."/>
            <person name="Wylie K."/>
            <person name="Sekhon M."/>
            <person name="Becker M.C."/>
            <person name="Fewell G.A."/>
            <person name="Delehaunty K.D."/>
            <person name="Miner T.L."/>
            <person name="Nash W.E."/>
            <person name="Kremitzki C."/>
            <person name="Oddy L."/>
            <person name="Du H."/>
            <person name="Sun H."/>
            <person name="Bradshaw-Cordum H."/>
            <person name="Ali J."/>
            <person name="Carter J."/>
            <person name="Cordes M."/>
            <person name="Harris A."/>
            <person name="Isak A."/>
            <person name="van Brunt A."/>
            <person name="Nguyen C."/>
            <person name="Du F."/>
            <person name="Courtney L."/>
            <person name="Kalicki J."/>
            <person name="Ozersky P."/>
            <person name="Abbott S."/>
            <person name="Armstrong J."/>
            <person name="Belter E.A."/>
            <person name="Caruso L."/>
            <person name="Cedroni M."/>
            <person name="Cotton M."/>
            <person name="Davidson T."/>
            <person name="Desai A."/>
            <person name="Elliott G."/>
            <person name="Erb T."/>
            <person name="Fronick C."/>
            <person name="Gaige T."/>
            <person name="Haakenson W."/>
            <person name="Haglund K."/>
            <person name="Holmes A."/>
            <person name="Harkins R."/>
            <person name="Kim K."/>
            <person name="Kruchowski S.S."/>
            <person name="Strong C.M."/>
            <person name="Grewal N."/>
            <person name="Goyea E."/>
            <person name="Hou S."/>
            <person name="Levy A."/>
            <person name="Martinka S."/>
            <person name="Mead K."/>
            <person name="McLellan M.D."/>
            <person name="Meyer R."/>
            <person name="Randall-Maher J."/>
            <person name="Tomlinson C."/>
            <person name="Dauphin-Kohlberg S."/>
            <person name="Kozlowicz-Reilly A."/>
            <person name="Shah N."/>
            <person name="Swearengen-Shahid S."/>
            <person name="Snider J."/>
            <person name="Strong J.T."/>
            <person name="Thompson J."/>
            <person name="Yoakum M."/>
            <person name="Leonard S."/>
            <person name="Pearman C."/>
            <person name="Trani L."/>
            <person name="Radionenko M."/>
            <person name="Waligorski J.E."/>
            <person name="Wang C."/>
            <person name="Rock S.M."/>
            <person name="Tin-Wollam A.-M."/>
            <person name="Maupin R."/>
            <person name="Latreille P."/>
            <person name="Wendl M.C."/>
            <person name="Yang S.-P."/>
            <person name="Pohl C."/>
            <person name="Wallis J.W."/>
            <person name="Spieth J."/>
            <person name="Bieri T.A."/>
            <person name="Berkowicz N."/>
            <person name="Nelson J.O."/>
            <person name="Osborne J."/>
            <person name="Ding L."/>
            <person name="Meyer R."/>
            <person name="Sabo A."/>
            <person name="Shotland Y."/>
            <person name="Sinha P."/>
            <person name="Wohldmann P.E."/>
            <person name="Cook L.L."/>
            <person name="Hickenbotham M.T."/>
            <person name="Eldred J."/>
            <person name="Williams D."/>
            <person name="Jones T.A."/>
            <person name="She X."/>
            <person name="Ciccarelli F.D."/>
            <person name="Izaurralde E."/>
            <person name="Taylor J."/>
            <person name="Schmutz J."/>
            <person name="Myers R.M."/>
            <person name="Cox D.R."/>
            <person name="Huang X."/>
            <person name="McPherson J.D."/>
            <person name="Mardis E.R."/>
            <person name="Clifton S.W."/>
            <person name="Warren W.C."/>
            <person name="Chinwalla A.T."/>
            <person name="Eddy S.R."/>
            <person name="Marra M.A."/>
            <person name="Ovcharenko I."/>
            <person name="Furey T.S."/>
            <person name="Miller W."/>
            <person name="Eichler E.E."/>
            <person name="Bork P."/>
            <person name="Suyama M."/>
            <person name="Torrents D."/>
            <person name="Waterston R.H."/>
            <person name="Wilson R.K."/>
        </authorList>
    </citation>
    <scope>NUCLEOTIDE SEQUENCE [LARGE SCALE GENOMIC DNA]</scope>
</reference>
<reference key="5">
    <citation type="journal article" date="2004" name="Genome Res.">
        <title>The status, quality, and expansion of the NIH full-length cDNA project: the Mammalian Gene Collection (MGC).</title>
        <authorList>
            <consortium name="The MGC Project Team"/>
        </authorList>
    </citation>
    <scope>NUCLEOTIDE SEQUENCE [LARGE SCALE MRNA] (ISOFORM 1)</scope>
    <source>
        <tissue>Brain</tissue>
    </source>
</reference>
<reference key="6">
    <citation type="journal article" date="1996" name="Genomics">
        <title>Chromosomal mapping of the human M6 genes.</title>
        <authorList>
            <person name="Olinsky S."/>
            <person name="Loop B.T."/>
            <person name="Dekosky A."/>
            <person name="Ripepi B."/>
            <person name="Weng W."/>
            <person name="Cummins J."/>
            <person name="Wenger S.L."/>
            <person name="Yan Y."/>
            <person name="Lagenaur C."/>
            <person name="Narayanan V."/>
        </authorList>
    </citation>
    <scope>NUCLEOTIDE SEQUENCE [MRNA] OF 100-278</scope>
    <source>
        <tissue>Spinal cord</tissue>
    </source>
</reference>
<reference key="7">
    <citation type="journal article" date="2009" name="Stem Cells Dev.">
        <title>Human GPM6A is associated with differentiation and neuronal migration of neurons derived from human embryonic stem cells.</title>
        <authorList>
            <person name="Michibata H."/>
            <person name="Okuno T."/>
            <person name="Konishi N."/>
            <person name="Kyono K."/>
            <person name="Wakimoto K."/>
            <person name="Aoki K."/>
            <person name="Kondo Y."/>
            <person name="Takata K."/>
            <person name="Kitamura Y."/>
            <person name="Taniguchi T."/>
        </authorList>
    </citation>
    <scope>FUNCTION</scope>
</reference>
<reference key="8">
    <citation type="journal article" date="2012" name="Mol. Cell. Proteomics">
        <title>Comparative large-scale characterisation of plant vs. mammal proteins reveals similar and idiosyncratic N-alpha acetylation features.</title>
        <authorList>
            <person name="Bienvenut W.V."/>
            <person name="Sumpton D."/>
            <person name="Martinez A."/>
            <person name="Lilla S."/>
            <person name="Espagne C."/>
            <person name="Meinnel T."/>
            <person name="Giglione C."/>
        </authorList>
    </citation>
    <scope>ACETYLATION [LARGE SCALE ANALYSIS] AT MET-1</scope>
    <scope>IDENTIFICATION BY MASS SPECTROMETRY [LARGE SCALE ANALYSIS]</scope>
</reference>
<reference key="9">
    <citation type="journal article" date="2014" name="Hum. Mol. Genet.">
        <title>The palmitoyl acyltransferase HIP14 shares a high proportion of interactors with huntingtin: implications for a role in the pathogenesis of Huntington's disease.</title>
        <authorList>
            <person name="Butland S.L."/>
            <person name="Sanders S.S."/>
            <person name="Schmidt M.E."/>
            <person name="Riechers S.P."/>
            <person name="Lin D.T."/>
            <person name="Martin D.D."/>
            <person name="Vaid K."/>
            <person name="Graham R.K."/>
            <person name="Singaraja R.R."/>
            <person name="Wanker E.E."/>
            <person name="Conibear E."/>
            <person name="Hayden M.R."/>
        </authorList>
    </citation>
    <scope>INTERACTION WITH ZDHHC17</scope>
    <scope>GLYCOSYLATION</scope>
    <scope>PALMITOYLATION</scope>
</reference>
<organism>
    <name type="scientific">Homo sapiens</name>
    <name type="common">Human</name>
    <dbReference type="NCBI Taxonomy" id="9606"/>
    <lineage>
        <taxon>Eukaryota</taxon>
        <taxon>Metazoa</taxon>
        <taxon>Chordata</taxon>
        <taxon>Craniata</taxon>
        <taxon>Vertebrata</taxon>
        <taxon>Euteleostomi</taxon>
        <taxon>Mammalia</taxon>
        <taxon>Eutheria</taxon>
        <taxon>Euarchontoglires</taxon>
        <taxon>Primates</taxon>
        <taxon>Haplorrhini</taxon>
        <taxon>Catarrhini</taxon>
        <taxon>Hominidae</taxon>
        <taxon>Homo</taxon>
    </lineage>
</organism>
<keyword id="KW-0007">Acetylation</keyword>
<keyword id="KW-0025">Alternative splicing</keyword>
<keyword id="KW-1003">Cell membrane</keyword>
<keyword id="KW-0966">Cell projection</keyword>
<keyword id="KW-1015">Disulfide bond</keyword>
<keyword id="KW-0325">Glycoprotein</keyword>
<keyword id="KW-0449">Lipoprotein</keyword>
<keyword id="KW-0472">Membrane</keyword>
<keyword id="KW-0524">Neurogenesis</keyword>
<keyword id="KW-0564">Palmitate</keyword>
<keyword id="KW-0597">Phosphoprotein</keyword>
<keyword id="KW-1267">Proteomics identification</keyword>
<keyword id="KW-1185">Reference proteome</keyword>
<keyword id="KW-0770">Synapse</keyword>
<keyword id="KW-0812">Transmembrane</keyword>
<keyword id="KW-1133">Transmembrane helix</keyword>
<name>GPM6A_HUMAN</name>
<comment type="function">
    <text evidence="5">Involved in neuronal differentiation, including differentiation and migration of neuronal stem cells. Plays a role in neuronal plasticity and is involved in neurite and filopodia outgrowth, filopodia motility and probably synapse formation. GPM6A-induced filopodia formation involves mitogen-activated protein kinase (MAPK) and Src signaling pathways. May be involved in neuronal NGF-dependent Ca(2+) influx. May be involved in regulation of endocytosis and intracellular trafficking of G-protein-coupled receptors (GPCRs); enhances internalization and recycling of mu-type opioid receptor.</text>
</comment>
<comment type="subunit">
    <text evidence="3 6">Interacts with OPRM1 (By similarity). Interacts with palmitoyltransferase ZDHHC17/HIP14; the interaction leads to palmitoylation of GPM6A (PubMed:24705354).</text>
</comment>
<comment type="interaction">
    <interactant intactId="EBI-7187133">
        <id>P51674</id>
    </interactant>
    <interactant intactId="EBI-466029">
        <id>P42858</id>
        <label>HTT</label>
    </interactant>
    <organismsDiffer>false</organismsDiffer>
    <experiments>4</experiments>
</comment>
<comment type="interaction">
    <interactant intactId="EBI-7187133">
        <id>P51674</id>
    </interactant>
    <interactant intactId="EBI-6398041">
        <id>Q9UMF0</id>
        <label>ICAM5</label>
    </interactant>
    <organismsDiffer>false</organismsDiffer>
    <experiments>3</experiments>
</comment>
<comment type="interaction">
    <interactant intactId="EBI-7187133">
        <id>P51674</id>
    </interactant>
    <interactant intactId="EBI-948266">
        <id>O14901</id>
        <label>KLF11</label>
    </interactant>
    <organismsDiffer>false</organismsDiffer>
    <experiments>3</experiments>
</comment>
<comment type="interaction">
    <interactant intactId="EBI-7187133">
        <id>P51674</id>
    </interactant>
    <interactant intactId="EBI-296151">
        <id>P37173</id>
        <label>TGFBR2</label>
    </interactant>
    <organismsDiffer>false</organismsDiffer>
    <experiments>3</experiments>
</comment>
<comment type="interaction">
    <interactant intactId="EBI-7187133">
        <id>P51674</id>
    </interactant>
    <interactant intactId="EBI-22114623">
        <id>Q5T9L3-1</id>
        <label>WLS</label>
    </interactant>
    <organismsDiffer>false</organismsDiffer>
    <experiments>2</experiments>
</comment>
<comment type="interaction">
    <interactant intactId="EBI-7187133">
        <id>P51674</id>
    </interactant>
    <interactant intactId="EBI-524753">
        <id>Q8IUH5</id>
        <label>ZDHHC17</label>
    </interactant>
    <organismsDiffer>false</organismsDiffer>
    <experiments>5</experiments>
</comment>
<comment type="subcellular location">
    <subcellularLocation>
        <location evidence="2">Cell membrane</location>
        <topology evidence="2">Multi-pass membrane protein</topology>
    </subcellularLocation>
    <subcellularLocation>
        <location evidence="2">Cell projection</location>
        <location evidence="2">Axon</location>
    </subcellularLocation>
    <subcellularLocation>
        <location evidence="2">Cell projection</location>
        <location evidence="2">Growth cone</location>
    </subcellularLocation>
    <subcellularLocation>
        <location evidence="3">Cell projection</location>
        <location evidence="3">Dendritic spine</location>
    </subcellularLocation>
    <subcellularLocation>
        <location evidence="3">Cell projection</location>
        <location evidence="3">Filopodium</location>
    </subcellularLocation>
    <subcellularLocation>
        <location evidence="3">Cell projection</location>
        <location evidence="3">Neuron projection</location>
    </subcellularLocation>
    <text evidence="2 3">Localizes to cholesterol-rich lipid rafts of the plasma membrane of hippocampal neurons. Localized to plasma membrane of cell bodies and neurites of hippocampal neurons. Localized in membrane protrusions (filopodia and spines) of primary hippocampal neurons (By similarity). Localized to the growth cone edge membrane of elongating axons (By similarity).</text>
</comment>
<comment type="alternative products">
    <event type="alternative splicing"/>
    <isoform>
        <id>P51674-1</id>
        <name>1</name>
        <sequence type="displayed"/>
    </isoform>
    <isoform>
        <id>P51674-2</id>
        <name>2</name>
        <sequence type="described" ref="VSP_045109"/>
    </isoform>
    <isoform>
        <id>P51674-3</id>
        <name>3</name>
        <sequence type="described" ref="VSP_046098"/>
    </isoform>
</comment>
<comment type="PTM">
    <text evidence="6">N-glycosylated.</text>
</comment>
<comment type="PTM">
    <text evidence="6">Palmitoylated by ZDHHC17/HIP14.</text>
</comment>
<comment type="similarity">
    <text evidence="9">Belongs to the myelin proteolipid protein family.</text>
</comment>
<feature type="chain" id="PRO_0000159018" description="Neuronal membrane glycoprotein M6-a">
    <location>
        <begin position="1"/>
        <end position="278"/>
    </location>
</feature>
<feature type="topological domain" description="Cytoplasmic" evidence="4">
    <location>
        <begin position="1"/>
        <end position="22"/>
    </location>
</feature>
<feature type="transmembrane region" description="Helical" evidence="4">
    <location>
        <begin position="23"/>
        <end position="43"/>
    </location>
</feature>
<feature type="topological domain" description="Extracellular" evidence="4">
    <location>
        <begin position="44"/>
        <end position="84"/>
    </location>
</feature>
<feature type="transmembrane region" description="Helical" evidence="4">
    <location>
        <begin position="85"/>
        <end position="105"/>
    </location>
</feature>
<feature type="topological domain" description="Cytoplasmic" evidence="4">
    <location>
        <begin position="106"/>
        <end position="127"/>
    </location>
</feature>
<feature type="transmembrane region" description="Helical" evidence="4">
    <location>
        <begin position="128"/>
        <end position="148"/>
    </location>
</feature>
<feature type="topological domain" description="Extracellular" evidence="1">
    <location>
        <begin position="149"/>
        <end position="213"/>
    </location>
</feature>
<feature type="transmembrane region" description="Helical" evidence="4">
    <location>
        <begin position="214"/>
        <end position="234"/>
    </location>
</feature>
<feature type="topological domain" description="Cytoplasmic" evidence="4">
    <location>
        <begin position="235"/>
        <end position="278"/>
    </location>
</feature>
<feature type="modified residue" description="N-acetylmethionine" evidence="10">
    <location>
        <position position="1"/>
    </location>
</feature>
<feature type="modified residue" description="Phosphoserine" evidence="2">
    <location>
        <position position="256"/>
    </location>
</feature>
<feature type="modified residue" description="Phosphothreonine" evidence="3">
    <location>
        <position position="278"/>
    </location>
</feature>
<feature type="glycosylation site" description="N-linked (GlcNAc...) asparagine" evidence="4">
    <location>
        <position position="164"/>
    </location>
</feature>
<feature type="glycosylation site" description="N-linked (GlcNAc...) asparagine" evidence="4">
    <location>
        <position position="208"/>
    </location>
</feature>
<feature type="disulfide bond" evidence="1">
    <location>
        <begin position="174"/>
        <end position="192"/>
    </location>
</feature>
<feature type="splice variant" id="VSP_045109" description="In isoform 2." evidence="7">
    <original>MEENMEEGQTQK</original>
    <variation>MTDLE</variation>
    <location>
        <begin position="1"/>
        <end position="12"/>
    </location>
</feature>
<feature type="splice variant" id="VSP_046098" description="In isoform 3." evidence="8">
    <original>MEENMEEGQTQK</original>
    <variation>M</variation>
    <location>
        <begin position="1"/>
        <end position="12"/>
    </location>
</feature>
<feature type="sequence variant" id="VAR_014895" description="In dbSNP:rs1049820.">
    <original>V</original>
    <variation>L</variation>
    <location>
        <position position="242"/>
    </location>
</feature>
<feature type="sequence conflict" description="In Ref. 6; AAB16889." evidence="9" ref="6">
    <original>E</original>
    <variation>A</variation>
    <location>
        <position position="102"/>
    </location>
</feature>
<accession>P51674</accession>
<accession>B7Z642</accession>
<accession>E9PHI5</accession>
<accession>Q92602</accession>
<evidence type="ECO:0000250" key="1"/>
<evidence type="ECO:0000250" key="2">
    <source>
        <dbReference type="UniProtKB" id="P35802"/>
    </source>
</evidence>
<evidence type="ECO:0000250" key="3">
    <source>
        <dbReference type="UniProtKB" id="Q812E9"/>
    </source>
</evidence>
<evidence type="ECO:0000255" key="4"/>
<evidence type="ECO:0000269" key="5">
    <source>
    </source>
</evidence>
<evidence type="ECO:0000269" key="6">
    <source>
    </source>
</evidence>
<evidence type="ECO:0000303" key="7">
    <source>
    </source>
</evidence>
<evidence type="ECO:0000303" key="8">
    <source ref="3"/>
</evidence>
<evidence type="ECO:0000305" key="9"/>
<evidence type="ECO:0007744" key="10">
    <source>
    </source>
</evidence>
<sequence>MEENMEEGQTQKGCFECCIKCLGGIPYASLIATILLYAGVALFCGCGHEALSGTVNILQTYFEMARTAGDTLDVFTMIDIFKYVIYGIAAAFFVYGILLMVEGFFTTGAIKDLYGDFKITTCGRCVSAWFIMLTYLFMLAWLGVTAFTSLPVYMYFNLWTICRNTTLVEGANLCLDLRQFGIVTIGEEKKICTVSENFLRMCESTELNMTFHLFIVALAGAGAAVIAMVHYLMVLSANWAYVKDACRMQKYEDIKSKEEQELHDIHSTRSKERLNAYT</sequence>
<protein>
    <recommendedName>
        <fullName>Neuronal membrane glycoprotein M6-a</fullName>
        <shortName>M6a</shortName>
    </recommendedName>
</protein>
<gene>
    <name type="primary">GPM6A</name>
    <name type="synonym">M6A</name>
</gene>
<dbReference type="EMBL" id="D49958">
    <property type="protein sequence ID" value="BAA08712.1"/>
    <property type="molecule type" value="mRNA"/>
</dbReference>
<dbReference type="EMBL" id="AK299788">
    <property type="protein sequence ID" value="BAH13128.1"/>
    <property type="molecule type" value="mRNA"/>
</dbReference>
<dbReference type="EMBL" id="AK226176">
    <property type="status" value="NOT_ANNOTATED_CDS"/>
    <property type="molecule type" value="mRNA"/>
</dbReference>
<dbReference type="EMBL" id="AC093819">
    <property type="status" value="NOT_ANNOTATED_CDS"/>
    <property type="molecule type" value="Genomic_DNA"/>
</dbReference>
<dbReference type="EMBL" id="AC097537">
    <property type="status" value="NOT_ANNOTATED_CDS"/>
    <property type="molecule type" value="Genomic_DNA"/>
</dbReference>
<dbReference type="EMBL" id="AC110794">
    <property type="status" value="NOT_ANNOTATED_CDS"/>
    <property type="molecule type" value="Genomic_DNA"/>
</dbReference>
<dbReference type="EMBL" id="BC022508">
    <property type="protein sequence ID" value="AAH22508.1"/>
    <property type="molecule type" value="mRNA"/>
</dbReference>
<dbReference type="EMBL" id="BC022528">
    <property type="protein sequence ID" value="AAH22528.1"/>
    <property type="molecule type" value="mRNA"/>
</dbReference>
<dbReference type="EMBL" id="U45956">
    <property type="protein sequence ID" value="AAB16889.1"/>
    <property type="molecule type" value="mRNA"/>
</dbReference>
<dbReference type="CCDS" id="CCDS3824.1">
    <molecule id="P51674-1"/>
</dbReference>
<dbReference type="CCDS" id="CCDS54822.1">
    <molecule id="P51674-3"/>
</dbReference>
<dbReference type="CCDS" id="CCDS58936.1">
    <molecule id="P51674-2"/>
</dbReference>
<dbReference type="RefSeq" id="NP_001248377.1">
    <molecule id="P51674-2"/>
    <property type="nucleotide sequence ID" value="NM_001261448.2"/>
</dbReference>
<dbReference type="RefSeq" id="NP_005268.1">
    <molecule id="P51674-1"/>
    <property type="nucleotide sequence ID" value="NM_005277.5"/>
</dbReference>
<dbReference type="RefSeq" id="NP_963885.1">
    <molecule id="P51674-1"/>
    <property type="nucleotide sequence ID" value="NM_201591.3"/>
</dbReference>
<dbReference type="RefSeq" id="NP_963886.1">
    <molecule id="P51674-3"/>
    <property type="nucleotide sequence ID" value="NM_201592.3"/>
</dbReference>
<dbReference type="BioGRID" id="109084">
    <property type="interactions" value="148"/>
</dbReference>
<dbReference type="FunCoup" id="P51674">
    <property type="interactions" value="595"/>
</dbReference>
<dbReference type="IntAct" id="P51674">
    <property type="interactions" value="134"/>
</dbReference>
<dbReference type="MINT" id="P51674"/>
<dbReference type="STRING" id="9606.ENSP00000280187"/>
<dbReference type="GlyCosmos" id="P51674">
    <property type="glycosylation" value="2 sites, No reported glycans"/>
</dbReference>
<dbReference type="GlyGen" id="P51674">
    <property type="glycosylation" value="2 sites"/>
</dbReference>
<dbReference type="iPTMnet" id="P51674"/>
<dbReference type="PhosphoSitePlus" id="P51674"/>
<dbReference type="SwissPalm" id="P51674"/>
<dbReference type="BioMuta" id="GPM6A"/>
<dbReference type="DMDM" id="2506889"/>
<dbReference type="jPOST" id="P51674"/>
<dbReference type="MassIVE" id="P51674"/>
<dbReference type="PaxDb" id="9606-ENSP00000280187"/>
<dbReference type="PeptideAtlas" id="P51674"/>
<dbReference type="ProteomicsDB" id="20544"/>
<dbReference type="ProteomicsDB" id="56364">
    <molecule id="P51674-1"/>
</dbReference>
<dbReference type="ProteomicsDB" id="6743"/>
<dbReference type="Pumba" id="P51674"/>
<dbReference type="Antibodypedia" id="17235">
    <property type="antibodies" value="299 antibodies from 31 providers"/>
</dbReference>
<dbReference type="DNASU" id="2823"/>
<dbReference type="Ensembl" id="ENST00000280187.11">
    <molecule id="P51674-1"/>
    <property type="protein sequence ID" value="ENSP00000280187.7"/>
    <property type="gene ID" value="ENSG00000150625.17"/>
</dbReference>
<dbReference type="Ensembl" id="ENST00000393658.7">
    <molecule id="P51674-1"/>
    <property type="protein sequence ID" value="ENSP00000377268.2"/>
    <property type="gene ID" value="ENSG00000150625.17"/>
</dbReference>
<dbReference type="Ensembl" id="ENST00000506894.5">
    <molecule id="P51674-3"/>
    <property type="protein sequence ID" value="ENSP00000421578.1"/>
    <property type="gene ID" value="ENSG00000150625.17"/>
</dbReference>
<dbReference type="Ensembl" id="ENST00000515090.5">
    <molecule id="P51674-2"/>
    <property type="protein sequence ID" value="ENSP00000423984.1"/>
    <property type="gene ID" value="ENSG00000150625.17"/>
</dbReference>
<dbReference type="GeneID" id="2823"/>
<dbReference type="KEGG" id="hsa:2823"/>
<dbReference type="MANE-Select" id="ENST00000393658.7">
    <property type="protein sequence ID" value="ENSP00000377268.2"/>
    <property type="RefSeq nucleotide sequence ID" value="NM_201591.3"/>
    <property type="RefSeq protein sequence ID" value="NP_963885.1"/>
</dbReference>
<dbReference type="UCSC" id="uc003iuf.5">
    <molecule id="P51674-1"/>
    <property type="organism name" value="human"/>
</dbReference>
<dbReference type="AGR" id="HGNC:4460"/>
<dbReference type="CTD" id="2823"/>
<dbReference type="DisGeNET" id="2823"/>
<dbReference type="GeneCards" id="GPM6A"/>
<dbReference type="HGNC" id="HGNC:4460">
    <property type="gene designation" value="GPM6A"/>
</dbReference>
<dbReference type="HPA" id="ENSG00000150625">
    <property type="expression patterns" value="Tissue enriched (brain)"/>
</dbReference>
<dbReference type="MIM" id="601275">
    <property type="type" value="gene"/>
</dbReference>
<dbReference type="neXtProt" id="NX_P51674"/>
<dbReference type="OpenTargets" id="ENSG00000150625"/>
<dbReference type="PharmGKB" id="PA28843"/>
<dbReference type="VEuPathDB" id="HostDB:ENSG00000150625"/>
<dbReference type="eggNOG" id="KOG4800">
    <property type="taxonomic scope" value="Eukaryota"/>
</dbReference>
<dbReference type="GeneTree" id="ENSGT00390000006915"/>
<dbReference type="HOGENOM" id="CLU_064167_2_0_1"/>
<dbReference type="InParanoid" id="P51674"/>
<dbReference type="OMA" id="CTLNENF"/>
<dbReference type="OrthoDB" id="9993736at2759"/>
<dbReference type="PAN-GO" id="P51674">
    <property type="GO annotations" value="5 GO annotations based on evolutionary models"/>
</dbReference>
<dbReference type="PhylomeDB" id="P51674"/>
<dbReference type="TreeFam" id="TF315162"/>
<dbReference type="PathwayCommons" id="P51674"/>
<dbReference type="SignaLink" id="P51674"/>
<dbReference type="SIGNOR" id="P51674"/>
<dbReference type="BioGRID-ORCS" id="2823">
    <property type="hits" value="9 hits in 1144 CRISPR screens"/>
</dbReference>
<dbReference type="ChiTaRS" id="GPM6A">
    <property type="organism name" value="human"/>
</dbReference>
<dbReference type="GeneWiki" id="GPM6A"/>
<dbReference type="GenomeRNAi" id="2823"/>
<dbReference type="Pharos" id="P51674">
    <property type="development level" value="Tbio"/>
</dbReference>
<dbReference type="PRO" id="PR:P51674"/>
<dbReference type="Proteomes" id="UP000005640">
    <property type="component" value="Chromosome 4"/>
</dbReference>
<dbReference type="RNAct" id="P51674">
    <property type="molecule type" value="protein"/>
</dbReference>
<dbReference type="Bgee" id="ENSG00000150625">
    <property type="expression patterns" value="Expressed in endothelial cell and 169 other cell types or tissues"/>
</dbReference>
<dbReference type="ExpressionAtlas" id="P51674">
    <property type="expression patterns" value="baseline and differential"/>
</dbReference>
<dbReference type="GO" id="GO:0044295">
    <property type="term" value="C:axonal growth cone"/>
    <property type="evidence" value="ECO:0000250"/>
    <property type="project" value="UniProtKB"/>
</dbReference>
<dbReference type="GO" id="GO:0043197">
    <property type="term" value="C:dendritic spine"/>
    <property type="evidence" value="ECO:0007669"/>
    <property type="project" value="UniProtKB-SubCell"/>
</dbReference>
<dbReference type="GO" id="GO:0070062">
    <property type="term" value="C:extracellular exosome"/>
    <property type="evidence" value="ECO:0007005"/>
    <property type="project" value="UniProtKB"/>
</dbReference>
<dbReference type="GO" id="GO:1903561">
    <property type="term" value="C:extracellular vesicle"/>
    <property type="evidence" value="ECO:0007005"/>
    <property type="project" value="UniProtKB"/>
</dbReference>
<dbReference type="GO" id="GO:0030175">
    <property type="term" value="C:filopodium"/>
    <property type="evidence" value="ECO:0000250"/>
    <property type="project" value="UniProtKB"/>
</dbReference>
<dbReference type="GO" id="GO:0098978">
    <property type="term" value="C:glutamatergic synapse"/>
    <property type="evidence" value="ECO:0007669"/>
    <property type="project" value="Ensembl"/>
</dbReference>
<dbReference type="GO" id="GO:0043005">
    <property type="term" value="C:neuron projection"/>
    <property type="evidence" value="ECO:0000250"/>
    <property type="project" value="UniProtKB"/>
</dbReference>
<dbReference type="GO" id="GO:0043025">
    <property type="term" value="C:neuronal cell body"/>
    <property type="evidence" value="ECO:0000250"/>
    <property type="project" value="UniProtKB"/>
</dbReference>
<dbReference type="GO" id="GO:0098688">
    <property type="term" value="C:parallel fiber to Purkinje cell synapse"/>
    <property type="evidence" value="ECO:0007669"/>
    <property type="project" value="Ensembl"/>
</dbReference>
<dbReference type="GO" id="GO:0005886">
    <property type="term" value="C:plasma membrane"/>
    <property type="evidence" value="ECO:0000250"/>
    <property type="project" value="UniProtKB"/>
</dbReference>
<dbReference type="GO" id="GO:0048787">
    <property type="term" value="C:presynaptic active zone membrane"/>
    <property type="evidence" value="ECO:0007669"/>
    <property type="project" value="Ensembl"/>
</dbReference>
<dbReference type="GO" id="GO:0005262">
    <property type="term" value="F:calcium channel activity"/>
    <property type="evidence" value="ECO:0007669"/>
    <property type="project" value="Ensembl"/>
</dbReference>
<dbReference type="GO" id="GO:0003407">
    <property type="term" value="P:neural retina development"/>
    <property type="evidence" value="ECO:0000250"/>
    <property type="project" value="UniProtKB"/>
</dbReference>
<dbReference type="GO" id="GO:0001764">
    <property type="term" value="P:neuron migration"/>
    <property type="evidence" value="ECO:0000314"/>
    <property type="project" value="UniProtKB"/>
</dbReference>
<dbReference type="GO" id="GO:0031175">
    <property type="term" value="P:neuron projection development"/>
    <property type="evidence" value="ECO:0000318"/>
    <property type="project" value="GO_Central"/>
</dbReference>
<dbReference type="GO" id="GO:0048812">
    <property type="term" value="P:neuron projection morphogenesis"/>
    <property type="evidence" value="ECO:0000250"/>
    <property type="project" value="UniProtKB"/>
</dbReference>
<dbReference type="GO" id="GO:0051491">
    <property type="term" value="P:positive regulation of filopodium assembly"/>
    <property type="evidence" value="ECO:0000250"/>
    <property type="project" value="UniProtKB"/>
</dbReference>
<dbReference type="GO" id="GO:0050807">
    <property type="term" value="P:regulation of synapse organization"/>
    <property type="evidence" value="ECO:0007669"/>
    <property type="project" value="Ensembl"/>
</dbReference>
<dbReference type="GO" id="GO:0009617">
    <property type="term" value="P:response to bacterium"/>
    <property type="evidence" value="ECO:0007669"/>
    <property type="project" value="Ensembl"/>
</dbReference>
<dbReference type="GO" id="GO:0048863">
    <property type="term" value="P:stem cell differentiation"/>
    <property type="evidence" value="ECO:0000314"/>
    <property type="project" value="UniProtKB"/>
</dbReference>
<dbReference type="GO" id="GO:0007416">
    <property type="term" value="P:synapse assembly"/>
    <property type="evidence" value="ECO:0000250"/>
    <property type="project" value="UniProtKB"/>
</dbReference>
<dbReference type="InterPro" id="IPR001614">
    <property type="entry name" value="Myelin_PLP"/>
</dbReference>
<dbReference type="InterPro" id="IPR018237">
    <property type="entry name" value="Myelin_PLP_CS"/>
</dbReference>
<dbReference type="PANTHER" id="PTHR11683">
    <property type="entry name" value="MYELIN PROTEOLIPID"/>
    <property type="match status" value="1"/>
</dbReference>
<dbReference type="PANTHER" id="PTHR11683:SF4">
    <property type="entry name" value="NEURONAL MEMBRANE GLYCOPROTEIN M6-A"/>
    <property type="match status" value="1"/>
</dbReference>
<dbReference type="Pfam" id="PF01275">
    <property type="entry name" value="Myelin_PLP"/>
    <property type="match status" value="1"/>
</dbReference>
<dbReference type="PRINTS" id="PR00214">
    <property type="entry name" value="MYELINPLP"/>
</dbReference>
<dbReference type="SMART" id="SM00002">
    <property type="entry name" value="PLP"/>
    <property type="match status" value="1"/>
</dbReference>
<dbReference type="PROSITE" id="PS00575">
    <property type="entry name" value="MYELIN_PLP_1"/>
    <property type="match status" value="1"/>
</dbReference>
<dbReference type="PROSITE" id="PS01004">
    <property type="entry name" value="MYELIN_PLP_2"/>
    <property type="match status" value="1"/>
</dbReference>